<organism>
    <name type="scientific">Bacillus pumilus (strain SAFR-032)</name>
    <dbReference type="NCBI Taxonomy" id="315750"/>
    <lineage>
        <taxon>Bacteria</taxon>
        <taxon>Bacillati</taxon>
        <taxon>Bacillota</taxon>
        <taxon>Bacilli</taxon>
        <taxon>Bacillales</taxon>
        <taxon>Bacillaceae</taxon>
        <taxon>Bacillus</taxon>
    </lineage>
</organism>
<evidence type="ECO:0000255" key="1">
    <source>
        <dbReference type="HAMAP-Rule" id="MF_00037"/>
    </source>
</evidence>
<name>MURB_BACP2</name>
<protein>
    <recommendedName>
        <fullName evidence="1">UDP-N-acetylenolpyruvoylglucosamine reductase</fullName>
        <ecNumber evidence="1">1.3.1.98</ecNumber>
    </recommendedName>
    <alternativeName>
        <fullName evidence="1">UDP-N-acetylmuramate dehydrogenase</fullName>
    </alternativeName>
</protein>
<gene>
    <name evidence="1" type="primary">murB</name>
    <name type="ordered locus">BPUM_1416</name>
</gene>
<dbReference type="EC" id="1.3.1.98" evidence="1"/>
<dbReference type="EMBL" id="CP000813">
    <property type="protein sequence ID" value="ABV62099.1"/>
    <property type="molecule type" value="Genomic_DNA"/>
</dbReference>
<dbReference type="RefSeq" id="WP_012009870.1">
    <property type="nucleotide sequence ID" value="NC_009848.4"/>
</dbReference>
<dbReference type="SMR" id="A8FCY2"/>
<dbReference type="STRING" id="315750.BPUM_1416"/>
<dbReference type="GeneID" id="5620679"/>
<dbReference type="KEGG" id="bpu:BPUM_1416"/>
<dbReference type="eggNOG" id="COG0812">
    <property type="taxonomic scope" value="Bacteria"/>
</dbReference>
<dbReference type="HOGENOM" id="CLU_035304_1_1_9"/>
<dbReference type="OrthoDB" id="9804753at2"/>
<dbReference type="UniPathway" id="UPA00219"/>
<dbReference type="Proteomes" id="UP000001355">
    <property type="component" value="Chromosome"/>
</dbReference>
<dbReference type="GO" id="GO:0005829">
    <property type="term" value="C:cytosol"/>
    <property type="evidence" value="ECO:0007669"/>
    <property type="project" value="TreeGrafter"/>
</dbReference>
<dbReference type="GO" id="GO:0071949">
    <property type="term" value="F:FAD binding"/>
    <property type="evidence" value="ECO:0007669"/>
    <property type="project" value="InterPro"/>
</dbReference>
<dbReference type="GO" id="GO:0008762">
    <property type="term" value="F:UDP-N-acetylmuramate dehydrogenase activity"/>
    <property type="evidence" value="ECO:0007669"/>
    <property type="project" value="UniProtKB-UniRule"/>
</dbReference>
<dbReference type="GO" id="GO:0051301">
    <property type="term" value="P:cell division"/>
    <property type="evidence" value="ECO:0007669"/>
    <property type="project" value="UniProtKB-KW"/>
</dbReference>
<dbReference type="GO" id="GO:0071555">
    <property type="term" value="P:cell wall organization"/>
    <property type="evidence" value="ECO:0007669"/>
    <property type="project" value="UniProtKB-KW"/>
</dbReference>
<dbReference type="GO" id="GO:0009252">
    <property type="term" value="P:peptidoglycan biosynthetic process"/>
    <property type="evidence" value="ECO:0007669"/>
    <property type="project" value="UniProtKB-UniRule"/>
</dbReference>
<dbReference type="GO" id="GO:0008360">
    <property type="term" value="P:regulation of cell shape"/>
    <property type="evidence" value="ECO:0007669"/>
    <property type="project" value="UniProtKB-KW"/>
</dbReference>
<dbReference type="Gene3D" id="3.30.465.10">
    <property type="match status" value="1"/>
</dbReference>
<dbReference type="Gene3D" id="3.90.78.10">
    <property type="entry name" value="UDP-N-acetylenolpyruvoylglucosamine reductase, C-terminal domain"/>
    <property type="match status" value="1"/>
</dbReference>
<dbReference type="Gene3D" id="3.30.43.10">
    <property type="entry name" value="Uridine Diphospho-n-acetylenolpyruvylglucosamine Reductase, domain 2"/>
    <property type="match status" value="1"/>
</dbReference>
<dbReference type="HAMAP" id="MF_00037">
    <property type="entry name" value="MurB"/>
    <property type="match status" value="1"/>
</dbReference>
<dbReference type="InterPro" id="IPR016166">
    <property type="entry name" value="FAD-bd_PCMH"/>
</dbReference>
<dbReference type="InterPro" id="IPR036318">
    <property type="entry name" value="FAD-bd_PCMH-like_sf"/>
</dbReference>
<dbReference type="InterPro" id="IPR016167">
    <property type="entry name" value="FAD-bd_PCMH_sub1"/>
</dbReference>
<dbReference type="InterPro" id="IPR016169">
    <property type="entry name" value="FAD-bd_PCMH_sub2"/>
</dbReference>
<dbReference type="InterPro" id="IPR003170">
    <property type="entry name" value="MurB"/>
</dbReference>
<dbReference type="InterPro" id="IPR011601">
    <property type="entry name" value="MurB_C"/>
</dbReference>
<dbReference type="InterPro" id="IPR036635">
    <property type="entry name" value="MurB_C_sf"/>
</dbReference>
<dbReference type="InterPro" id="IPR006094">
    <property type="entry name" value="Oxid_FAD_bind_N"/>
</dbReference>
<dbReference type="NCBIfam" id="TIGR00179">
    <property type="entry name" value="murB"/>
    <property type="match status" value="1"/>
</dbReference>
<dbReference type="NCBIfam" id="NF010480">
    <property type="entry name" value="PRK13905.1"/>
    <property type="match status" value="1"/>
</dbReference>
<dbReference type="PANTHER" id="PTHR21071">
    <property type="entry name" value="UDP-N-ACETYLENOLPYRUVOYLGLUCOSAMINE REDUCTASE"/>
    <property type="match status" value="1"/>
</dbReference>
<dbReference type="PANTHER" id="PTHR21071:SF5">
    <property type="entry name" value="UDP-N-ACETYLENOLPYRUVOYLGLUCOSAMINE REDUCTASE"/>
    <property type="match status" value="1"/>
</dbReference>
<dbReference type="Pfam" id="PF01565">
    <property type="entry name" value="FAD_binding_4"/>
    <property type="match status" value="1"/>
</dbReference>
<dbReference type="Pfam" id="PF02873">
    <property type="entry name" value="MurB_C"/>
    <property type="match status" value="1"/>
</dbReference>
<dbReference type="SUPFAM" id="SSF56176">
    <property type="entry name" value="FAD-binding/transporter-associated domain-like"/>
    <property type="match status" value="1"/>
</dbReference>
<dbReference type="SUPFAM" id="SSF56194">
    <property type="entry name" value="Uridine diphospho-N-Acetylenolpyruvylglucosamine reductase, MurB, C-terminal domain"/>
    <property type="match status" value="1"/>
</dbReference>
<dbReference type="PROSITE" id="PS51387">
    <property type="entry name" value="FAD_PCMH"/>
    <property type="match status" value="1"/>
</dbReference>
<proteinExistence type="inferred from homology"/>
<feature type="chain" id="PRO_1000057272" description="UDP-N-acetylenolpyruvoylglucosamine reductase">
    <location>
        <begin position="1"/>
        <end position="303"/>
    </location>
</feature>
<feature type="domain" description="FAD-binding PCMH-type" evidence="1">
    <location>
        <begin position="30"/>
        <end position="196"/>
    </location>
</feature>
<feature type="active site" evidence="1">
    <location>
        <position position="174"/>
    </location>
</feature>
<feature type="active site" description="Proton donor" evidence="1">
    <location>
        <position position="225"/>
    </location>
</feature>
<feature type="active site" evidence="1">
    <location>
        <position position="295"/>
    </location>
</feature>
<keyword id="KW-0131">Cell cycle</keyword>
<keyword id="KW-0132">Cell division</keyword>
<keyword id="KW-0133">Cell shape</keyword>
<keyword id="KW-0961">Cell wall biogenesis/degradation</keyword>
<keyword id="KW-0963">Cytoplasm</keyword>
<keyword id="KW-0274">FAD</keyword>
<keyword id="KW-0285">Flavoprotein</keyword>
<keyword id="KW-0521">NADP</keyword>
<keyword id="KW-0560">Oxidoreductase</keyword>
<keyword id="KW-0573">Peptidoglycan synthesis</keyword>
<sequence length="303" mass="33353">MENLKNELLEAQVGKVLENEPLANHTTMKIGGPADLLIIPKDIDAVKTIMDHVKKHQTNWTVIGRGSNLLVLDKGIRGVVLKLGTGLDHLTVNDEEITVGGGYSVVRLATSLSKQGLSGLEFAAGIPGSIGGAVYMNAGAHGSDISKILVKARILFEDGSIEWLTNEQMNFSYRTSVLQKERPGIVLEAVFKLKQDDREKITKKMQQNKDYRKETQPYNRPCAGSIFRNPLPEYAGQLVEKANLKGYQLGGARISDMHGNFIVNAGGATAQDVLDLIQFIQKKIKEDYNVEMHTEVEIIGEEN</sequence>
<accession>A8FCY2</accession>
<comment type="function">
    <text evidence="1">Cell wall formation.</text>
</comment>
<comment type="catalytic activity">
    <reaction evidence="1">
        <text>UDP-N-acetyl-alpha-D-muramate + NADP(+) = UDP-N-acetyl-3-O-(1-carboxyvinyl)-alpha-D-glucosamine + NADPH + H(+)</text>
        <dbReference type="Rhea" id="RHEA:12248"/>
        <dbReference type="ChEBI" id="CHEBI:15378"/>
        <dbReference type="ChEBI" id="CHEBI:57783"/>
        <dbReference type="ChEBI" id="CHEBI:58349"/>
        <dbReference type="ChEBI" id="CHEBI:68483"/>
        <dbReference type="ChEBI" id="CHEBI:70757"/>
        <dbReference type="EC" id="1.3.1.98"/>
    </reaction>
</comment>
<comment type="cofactor">
    <cofactor evidence="1">
        <name>FAD</name>
        <dbReference type="ChEBI" id="CHEBI:57692"/>
    </cofactor>
</comment>
<comment type="pathway">
    <text evidence="1">Cell wall biogenesis; peptidoglycan biosynthesis.</text>
</comment>
<comment type="subcellular location">
    <subcellularLocation>
        <location evidence="1">Cytoplasm</location>
    </subcellularLocation>
</comment>
<comment type="similarity">
    <text evidence="1">Belongs to the MurB family.</text>
</comment>
<reference key="1">
    <citation type="journal article" date="2007" name="PLoS ONE">
        <title>Paradoxical DNA repair and peroxide resistance gene conservation in Bacillus pumilus SAFR-032.</title>
        <authorList>
            <person name="Gioia J."/>
            <person name="Yerrapragada S."/>
            <person name="Qin X."/>
            <person name="Jiang H."/>
            <person name="Igboeli O.C."/>
            <person name="Muzny D."/>
            <person name="Dugan-Rocha S."/>
            <person name="Ding Y."/>
            <person name="Hawes A."/>
            <person name="Liu W."/>
            <person name="Perez L."/>
            <person name="Kovar C."/>
            <person name="Dinh H."/>
            <person name="Lee S."/>
            <person name="Nazareth L."/>
            <person name="Blyth P."/>
            <person name="Holder M."/>
            <person name="Buhay C."/>
            <person name="Tirumalai M.R."/>
            <person name="Liu Y."/>
            <person name="Dasgupta I."/>
            <person name="Bokhetache L."/>
            <person name="Fujita M."/>
            <person name="Karouia F."/>
            <person name="Eswara Moorthy P."/>
            <person name="Siefert J."/>
            <person name="Uzman A."/>
            <person name="Buzumbo P."/>
            <person name="Verma A."/>
            <person name="Zwiya H."/>
            <person name="McWilliams B.D."/>
            <person name="Olowu A."/>
            <person name="Clinkenbeard K.D."/>
            <person name="Newcombe D."/>
            <person name="Golebiewski L."/>
            <person name="Petrosino J.F."/>
            <person name="Nicholson W.L."/>
            <person name="Fox G.E."/>
            <person name="Venkateswaran K."/>
            <person name="Highlander S.K."/>
            <person name="Weinstock G.M."/>
        </authorList>
    </citation>
    <scope>NUCLEOTIDE SEQUENCE [LARGE SCALE GENOMIC DNA]</scope>
    <source>
        <strain>SAFR-032</strain>
    </source>
</reference>